<keyword id="KW-1185">Reference proteome</keyword>
<keyword id="KW-0732">Signal</keyword>
<name>LCL2_TALMQ</name>
<reference key="1">
    <citation type="journal article" date="2015" name="Genome Announc.">
        <title>Genome sequence of the AIDS-associated pathogen Penicillium marneffei (ATCC18224) and its near taxonomic relative Talaromyces stipitatus (ATCC10500).</title>
        <authorList>
            <person name="Nierman W.C."/>
            <person name="Fedorova-Abrams N.D."/>
            <person name="Andrianopoulos A."/>
        </authorList>
    </citation>
    <scope>NUCLEOTIDE SEQUENCE [LARGE SCALE GENOMIC DNA]</scope>
    <source>
        <strain>ATCC 18224 / CBS 334.59 / QM 7333</strain>
    </source>
</reference>
<comment type="function">
    <text evidence="1">Probable component of the endoplasmic reticulum-associated degradation (ERAD) pathway.</text>
</comment>
<comment type="similarity">
    <text evidence="3">Belongs to the LCL2 family.</text>
</comment>
<gene>
    <name type="primary">lcl2</name>
    <name type="ORF">PMAA_083440</name>
</gene>
<protein>
    <recommendedName>
        <fullName>Long chronological lifespan protein 2</fullName>
    </recommendedName>
</protein>
<dbReference type="EMBL" id="DS995901">
    <property type="protein sequence ID" value="EEA24340.1"/>
    <property type="molecule type" value="Genomic_DNA"/>
</dbReference>
<dbReference type="RefSeq" id="XP_002147851.1">
    <property type="nucleotide sequence ID" value="XM_002147815.1"/>
</dbReference>
<dbReference type="STRING" id="441960.B6QFV5"/>
<dbReference type="VEuPathDB" id="FungiDB:PMAA_083440"/>
<dbReference type="HOGENOM" id="CLU_142363_0_0_1"/>
<dbReference type="OrthoDB" id="14150at28568"/>
<dbReference type="PhylomeDB" id="B6QFV5"/>
<dbReference type="Proteomes" id="UP000001294">
    <property type="component" value="Unassembled WGS sequence"/>
</dbReference>
<dbReference type="GO" id="GO:0036503">
    <property type="term" value="P:ERAD pathway"/>
    <property type="evidence" value="ECO:0007669"/>
    <property type="project" value="TreeGrafter"/>
</dbReference>
<dbReference type="CDD" id="cd23996">
    <property type="entry name" value="LCL2-like"/>
    <property type="match status" value="1"/>
</dbReference>
<dbReference type="InterPro" id="IPR034543">
    <property type="entry name" value="LCL2"/>
</dbReference>
<dbReference type="PANTHER" id="PTHR38425">
    <property type="entry name" value="LONG CHRONOLOGICAL LIFESPAN PROTEIN 2"/>
    <property type="match status" value="1"/>
</dbReference>
<dbReference type="PANTHER" id="PTHR38425:SF1">
    <property type="entry name" value="LONG CHRONOLOGICAL LIFESPAN PROTEIN 2"/>
    <property type="match status" value="1"/>
</dbReference>
<feature type="signal peptide" evidence="2">
    <location>
        <begin position="1"/>
        <end position="21"/>
    </location>
</feature>
<feature type="chain" id="PRO_0000408619" description="Long chronological lifespan protein 2">
    <location>
        <begin position="22"/>
        <end position="122"/>
    </location>
</feature>
<organism>
    <name type="scientific">Talaromyces marneffei (strain ATCC 18224 / CBS 334.59 / QM 7333)</name>
    <name type="common">Penicillium marneffei</name>
    <dbReference type="NCBI Taxonomy" id="441960"/>
    <lineage>
        <taxon>Eukaryota</taxon>
        <taxon>Fungi</taxon>
        <taxon>Dikarya</taxon>
        <taxon>Ascomycota</taxon>
        <taxon>Pezizomycotina</taxon>
        <taxon>Eurotiomycetes</taxon>
        <taxon>Eurotiomycetidae</taxon>
        <taxon>Eurotiales</taxon>
        <taxon>Trichocomaceae</taxon>
        <taxon>Talaromyces</taxon>
        <taxon>Talaromyces sect. Talaromyces</taxon>
    </lineage>
</organism>
<sequence length="122" mass="13433">MLAKPLTAIWTLFLLISTAQAQFQFFEQMFGGGGSHQGHQQEQEASSDSSWYQQTWEGTHCTKYLCPDTLACVHFPHHCPCPHPSVEEKVELGEGSAVCVSRGGWTAGEAARKIELARKGVL</sequence>
<evidence type="ECO:0000250" key="1"/>
<evidence type="ECO:0000255" key="2"/>
<evidence type="ECO:0000305" key="3"/>
<accession>B6QFV5</accession>
<proteinExistence type="inferred from homology"/>